<name>NCTR3_PANTR</name>
<comment type="function">
    <text evidence="1">Cell membrane receptor of natural killer/NK cells that is activated by binding of extracellular ligands including BAG6 and NCR3LG1. Stimulates NK cells cytotoxicity toward neighboring cells producing these ligands. It controls, for instance, NK cells cytotoxicity against tumor cells. Engagement of NCR3 by BAG6 also promotes myeloid dendritic cells (DC) maturation, both through killing DCs that did not acquire a mature phenotype, and inducing the release by NK cells of TNFA and IFNG that promote DC maturation.</text>
</comment>
<comment type="subunit">
    <text evidence="1">Homodimer in the unliganted form. Interacts with CD3Z. Interacts with and is activated by binding to NCR3LG1. Interacts with and is activated by binding to BAG6. Interacts with and is inhibited by binding to LGALS3.</text>
</comment>
<comment type="subcellular location">
    <subcellularLocation>
        <location evidence="1">Cell membrane</location>
        <topology evidence="2">Single-pass type I membrane protein</topology>
    </subcellularLocation>
</comment>
<comment type="similarity">
    <text evidence="4">Belongs to the natural cytotoxicity receptor (NCR) family.</text>
</comment>
<organism>
    <name type="scientific">Pan troglodytes</name>
    <name type="common">Chimpanzee</name>
    <dbReference type="NCBI Taxonomy" id="9598"/>
    <lineage>
        <taxon>Eukaryota</taxon>
        <taxon>Metazoa</taxon>
        <taxon>Chordata</taxon>
        <taxon>Craniata</taxon>
        <taxon>Vertebrata</taxon>
        <taxon>Euteleostomi</taxon>
        <taxon>Mammalia</taxon>
        <taxon>Eutheria</taxon>
        <taxon>Euarchontoglires</taxon>
        <taxon>Primates</taxon>
        <taxon>Haplorrhini</taxon>
        <taxon>Catarrhini</taxon>
        <taxon>Hominidae</taxon>
        <taxon>Pan</taxon>
    </lineage>
</organism>
<reference key="1">
    <citation type="submission" date="2002-11" db="EMBL/GenBank/DDBJ databases">
        <title>Characterization of natural killer receptors in chimpanzees.</title>
        <authorList>
            <person name="Biassoni R."/>
        </authorList>
    </citation>
    <scope>NUCLEOTIDE SEQUENCE [MRNA]</scope>
    <source>
        <tissue>Lymphoid tissue</tissue>
    </source>
</reference>
<accession>P61484</accession>
<gene>
    <name type="primary">NCR3</name>
</gene>
<feature type="signal peptide" evidence="2">
    <location>
        <begin position="1"/>
        <end position="18"/>
    </location>
</feature>
<feature type="chain" id="PRO_0000015035" description="Natural cytotoxicity triggering receptor 3">
    <location>
        <begin position="19"/>
        <end position="201"/>
    </location>
</feature>
<feature type="topological domain" description="Extracellular" evidence="2">
    <location>
        <begin position="19"/>
        <end position="135"/>
    </location>
</feature>
<feature type="transmembrane region" description="Helical" evidence="2">
    <location>
        <begin position="136"/>
        <end position="156"/>
    </location>
</feature>
<feature type="topological domain" description="Cytoplasmic" evidence="2">
    <location>
        <begin position="157"/>
        <end position="201"/>
    </location>
</feature>
<feature type="domain" description="Ig-like">
    <location>
        <begin position="19"/>
        <end position="126"/>
    </location>
</feature>
<feature type="glycosylation site" description="N-linked (GlcNAc...) asparagine" evidence="2">
    <location>
        <position position="42"/>
    </location>
</feature>
<feature type="glycosylation site" description="N-linked (GlcNAc...) asparagine" evidence="2">
    <location>
        <position position="121"/>
    </location>
</feature>
<feature type="disulfide bond" evidence="3">
    <location>
        <begin position="39"/>
        <end position="108"/>
    </location>
</feature>
<dbReference type="EMBL" id="AJ516006">
    <property type="protein sequence ID" value="CAD56759.1"/>
    <property type="molecule type" value="mRNA"/>
</dbReference>
<dbReference type="RefSeq" id="NP_001009016.1">
    <property type="nucleotide sequence ID" value="NM_001009016.1"/>
</dbReference>
<dbReference type="SMR" id="P61484"/>
<dbReference type="FunCoup" id="P61484">
    <property type="interactions" value="655"/>
</dbReference>
<dbReference type="STRING" id="9598.ENSPTRP00000030663"/>
<dbReference type="GlyCosmos" id="P61484">
    <property type="glycosylation" value="2 sites, No reported glycans"/>
</dbReference>
<dbReference type="PaxDb" id="9598-ENSPTRP00000030663"/>
<dbReference type="GeneID" id="449613"/>
<dbReference type="KEGG" id="ptr:449613"/>
<dbReference type="CTD" id="259197"/>
<dbReference type="eggNOG" id="ENOG502SGFD">
    <property type="taxonomic scope" value="Eukaryota"/>
</dbReference>
<dbReference type="HOGENOM" id="CLU_132406_0_0_1"/>
<dbReference type="InParanoid" id="P61484"/>
<dbReference type="TreeFam" id="TF337790"/>
<dbReference type="Proteomes" id="UP000002277">
    <property type="component" value="Unplaced"/>
</dbReference>
<dbReference type="GO" id="GO:0005886">
    <property type="term" value="C:plasma membrane"/>
    <property type="evidence" value="ECO:0007669"/>
    <property type="project" value="UniProtKB-SubCell"/>
</dbReference>
<dbReference type="GO" id="GO:0002429">
    <property type="term" value="P:immune response-activating cell surface receptor signaling pathway"/>
    <property type="evidence" value="ECO:0000250"/>
    <property type="project" value="UniProtKB"/>
</dbReference>
<dbReference type="GO" id="GO:0030101">
    <property type="term" value="P:natural killer cell activation"/>
    <property type="evidence" value="ECO:0000250"/>
    <property type="project" value="UniProtKB"/>
</dbReference>
<dbReference type="GO" id="GO:0045954">
    <property type="term" value="P:positive regulation of natural killer cell mediated cytotoxicity"/>
    <property type="evidence" value="ECO:0000318"/>
    <property type="project" value="GO_Central"/>
</dbReference>
<dbReference type="CDD" id="cd20926">
    <property type="entry name" value="IgV_NKp30"/>
    <property type="match status" value="1"/>
</dbReference>
<dbReference type="FunFam" id="2.60.40.10:FF:000860">
    <property type="entry name" value="natural cytotoxicity triggering receptor 3"/>
    <property type="match status" value="1"/>
</dbReference>
<dbReference type="Gene3D" id="2.60.40.10">
    <property type="entry name" value="Immunoglobulins"/>
    <property type="match status" value="1"/>
</dbReference>
<dbReference type="InterPro" id="IPR007110">
    <property type="entry name" value="Ig-like_dom"/>
</dbReference>
<dbReference type="InterPro" id="IPR036179">
    <property type="entry name" value="Ig-like_dom_sf"/>
</dbReference>
<dbReference type="InterPro" id="IPR013783">
    <property type="entry name" value="Ig-like_fold"/>
</dbReference>
<dbReference type="InterPro" id="IPR003599">
    <property type="entry name" value="Ig_sub"/>
</dbReference>
<dbReference type="InterPro" id="IPR013106">
    <property type="entry name" value="Ig_V-set"/>
</dbReference>
<dbReference type="InterPro" id="IPR043226">
    <property type="entry name" value="NCR3"/>
</dbReference>
<dbReference type="PANTHER" id="PTHR47904">
    <property type="entry name" value="NATURAL CYTOTOXICITY TRIGGERING RECEPTOR 3"/>
    <property type="match status" value="1"/>
</dbReference>
<dbReference type="PANTHER" id="PTHR47904:SF1">
    <property type="entry name" value="NATURAL CYTOTOXICITY TRIGGERING RECEPTOR 3"/>
    <property type="match status" value="1"/>
</dbReference>
<dbReference type="Pfam" id="PF07686">
    <property type="entry name" value="V-set"/>
    <property type="match status" value="1"/>
</dbReference>
<dbReference type="SMART" id="SM00409">
    <property type="entry name" value="IG"/>
    <property type="match status" value="1"/>
</dbReference>
<dbReference type="SUPFAM" id="SSF48726">
    <property type="entry name" value="Immunoglobulin"/>
    <property type="match status" value="1"/>
</dbReference>
<dbReference type="PROSITE" id="PS50835">
    <property type="entry name" value="IG_LIKE"/>
    <property type="match status" value="1"/>
</dbReference>
<keyword id="KW-1003">Cell membrane</keyword>
<keyword id="KW-1015">Disulfide bond</keyword>
<keyword id="KW-0325">Glycoprotein</keyword>
<keyword id="KW-0391">Immunity</keyword>
<keyword id="KW-0393">Immunoglobulin domain</keyword>
<keyword id="KW-0472">Membrane</keyword>
<keyword id="KW-0675">Receptor</keyword>
<keyword id="KW-1185">Reference proteome</keyword>
<keyword id="KW-0732">Signal</keyword>
<keyword id="KW-0812">Transmembrane</keyword>
<keyword id="KW-1133">Transmembrane helix</keyword>
<proteinExistence type="evidence at transcript level"/>
<evidence type="ECO:0000250" key="1">
    <source>
        <dbReference type="UniProtKB" id="O14931"/>
    </source>
</evidence>
<evidence type="ECO:0000255" key="2"/>
<evidence type="ECO:0000255" key="3">
    <source>
        <dbReference type="PROSITE-ProRule" id="PRU00114"/>
    </source>
</evidence>
<evidence type="ECO:0000305" key="4"/>
<sequence length="201" mass="21656">MAWMLLLILIMVHPGSCALWVSQPPEIRTLEGSSAFLPCSFNASQGRLAIGSVTWFRDEVVPGKEVRNETPEFRGRLAPLASSRFLHDHQAELHIRDVRGHDASIYVCRVEVLGLGVGTGNGTRLVVEKEHPQLGAGTVLLLRAGFYAVSFLSVAVGSTVYYQGKCLTWKGPRRQLPAVVPAPLPPPCGSSAQLLPPVPGG</sequence>
<protein>
    <recommendedName>
        <fullName>Natural cytotoxicity triggering receptor 3</fullName>
    </recommendedName>
    <alternativeName>
        <fullName>Natural killer cell p30-related protein</fullName>
        <shortName>NK-p30</shortName>
        <shortName>NKp30</shortName>
    </alternativeName>
    <cdAntigenName>CD337</cdAntigenName>
</protein>